<sequence length="314" mass="34906">MIEIEKPKIETIEISDDAKYGKFVVEPLERGYGTTLGNSLRRILLSSLPGAAVTSIQIDGALHEFSVIEGVVEDVTTMILNIKKLALKIYSDEEKTLEIDMQGPGVVTAADINYDSDVEILNPDLHIATLSDNAKFHVRLNATRGRGYTPADQNKRENMPIGVLPVDSIFSPVIRVNYQVENTRVGQSTNYDKLTFDVLTDGSISPEEAVSLGAKILSEHLSIFVNLTDEAQKAEIMIEKEESHKEKVLEMTIEELDLSVRSYNCLKRAGINTVQELADKSEDDMMKVRNLGRKSLEEVKVKLADLGLSLRNEN</sequence>
<name>RPOA_LISMO</name>
<protein>
    <recommendedName>
        <fullName evidence="1">DNA-directed RNA polymerase subunit alpha</fullName>
        <shortName evidence="1">RNAP subunit alpha</shortName>
        <ecNumber evidence="1">2.7.7.6</ecNumber>
    </recommendedName>
    <alternativeName>
        <fullName evidence="1">RNA polymerase subunit alpha</fullName>
    </alternativeName>
    <alternativeName>
        <fullName evidence="1">Transcriptase subunit alpha</fullName>
    </alternativeName>
</protein>
<comment type="function">
    <text evidence="1">DNA-dependent RNA polymerase catalyzes the transcription of DNA into RNA using the four ribonucleoside triphosphates as substrates.</text>
</comment>
<comment type="catalytic activity">
    <reaction evidence="1">
        <text>RNA(n) + a ribonucleoside 5'-triphosphate = RNA(n+1) + diphosphate</text>
        <dbReference type="Rhea" id="RHEA:21248"/>
        <dbReference type="Rhea" id="RHEA-COMP:14527"/>
        <dbReference type="Rhea" id="RHEA-COMP:17342"/>
        <dbReference type="ChEBI" id="CHEBI:33019"/>
        <dbReference type="ChEBI" id="CHEBI:61557"/>
        <dbReference type="ChEBI" id="CHEBI:140395"/>
        <dbReference type="EC" id="2.7.7.6"/>
    </reaction>
</comment>
<comment type="subunit">
    <text evidence="1">Homodimer. The RNAP catalytic core consists of 2 alpha, 1 beta, 1 beta' and 1 omega subunit. When a sigma factor is associated with the core the holoenzyme is formed, which can initiate transcription.</text>
</comment>
<comment type="domain">
    <text evidence="1">The N-terminal domain is essential for RNAP assembly and basal transcription, whereas the C-terminal domain is involved in interaction with transcriptional regulators and with upstream promoter elements.</text>
</comment>
<comment type="similarity">
    <text evidence="1">Belongs to the RNA polymerase alpha chain family.</text>
</comment>
<keyword id="KW-0240">DNA-directed RNA polymerase</keyword>
<keyword id="KW-0548">Nucleotidyltransferase</keyword>
<keyword id="KW-1185">Reference proteome</keyword>
<keyword id="KW-0804">Transcription</keyword>
<keyword id="KW-0808">Transferase</keyword>
<proteinExistence type="inferred from homology"/>
<feature type="chain" id="PRO_0000175330" description="DNA-directed RNA polymerase subunit alpha">
    <location>
        <begin position="1"/>
        <end position="314"/>
    </location>
</feature>
<feature type="region of interest" description="Alpha N-terminal domain (alpha-NTD)" evidence="1">
    <location>
        <begin position="1"/>
        <end position="228"/>
    </location>
</feature>
<feature type="region of interest" description="Alpha C-terminal domain (alpha-CTD)" evidence="1">
    <location>
        <begin position="245"/>
        <end position="314"/>
    </location>
</feature>
<accession>P66699</accession>
<accession>Q927N3</accession>
<organism>
    <name type="scientific">Listeria monocytogenes serovar 1/2a (strain ATCC BAA-679 / EGD-e)</name>
    <dbReference type="NCBI Taxonomy" id="169963"/>
    <lineage>
        <taxon>Bacteria</taxon>
        <taxon>Bacillati</taxon>
        <taxon>Bacillota</taxon>
        <taxon>Bacilli</taxon>
        <taxon>Bacillales</taxon>
        <taxon>Listeriaceae</taxon>
        <taxon>Listeria</taxon>
    </lineage>
</organism>
<dbReference type="EC" id="2.7.7.6" evidence="1"/>
<dbReference type="EMBL" id="AL591983">
    <property type="protein sequence ID" value="CAD00684.1"/>
    <property type="molecule type" value="Genomic_DNA"/>
</dbReference>
<dbReference type="PIR" id="AF1400">
    <property type="entry name" value="AF1400"/>
</dbReference>
<dbReference type="RefSeq" id="NP_466129.1">
    <property type="nucleotide sequence ID" value="NC_003210.1"/>
</dbReference>
<dbReference type="RefSeq" id="WP_003723676.1">
    <property type="nucleotide sequence ID" value="NZ_CP149495.1"/>
</dbReference>
<dbReference type="SMR" id="P66699"/>
<dbReference type="STRING" id="169963.gene:17595324"/>
<dbReference type="PaxDb" id="169963-lmo2606"/>
<dbReference type="EnsemblBacteria" id="CAD00684">
    <property type="protein sequence ID" value="CAD00684"/>
    <property type="gene ID" value="CAD00684"/>
</dbReference>
<dbReference type="GeneID" id="984700"/>
<dbReference type="KEGG" id="lmo:lmo2606"/>
<dbReference type="PATRIC" id="fig|169963.11.peg.2670"/>
<dbReference type="eggNOG" id="COG0202">
    <property type="taxonomic scope" value="Bacteria"/>
</dbReference>
<dbReference type="HOGENOM" id="CLU_053084_0_1_9"/>
<dbReference type="OrthoDB" id="9805706at2"/>
<dbReference type="PhylomeDB" id="P66699"/>
<dbReference type="BioCyc" id="LMON169963:LMO2606-MONOMER"/>
<dbReference type="Proteomes" id="UP000000817">
    <property type="component" value="Chromosome"/>
</dbReference>
<dbReference type="GO" id="GO:0005737">
    <property type="term" value="C:cytoplasm"/>
    <property type="evidence" value="ECO:0000318"/>
    <property type="project" value="GO_Central"/>
</dbReference>
<dbReference type="GO" id="GO:0000428">
    <property type="term" value="C:DNA-directed RNA polymerase complex"/>
    <property type="evidence" value="ECO:0007669"/>
    <property type="project" value="UniProtKB-KW"/>
</dbReference>
<dbReference type="GO" id="GO:0003677">
    <property type="term" value="F:DNA binding"/>
    <property type="evidence" value="ECO:0007669"/>
    <property type="project" value="UniProtKB-UniRule"/>
</dbReference>
<dbReference type="GO" id="GO:0003899">
    <property type="term" value="F:DNA-directed RNA polymerase activity"/>
    <property type="evidence" value="ECO:0007669"/>
    <property type="project" value="UniProtKB-UniRule"/>
</dbReference>
<dbReference type="GO" id="GO:0046983">
    <property type="term" value="F:protein dimerization activity"/>
    <property type="evidence" value="ECO:0007669"/>
    <property type="project" value="InterPro"/>
</dbReference>
<dbReference type="GO" id="GO:0006351">
    <property type="term" value="P:DNA-templated transcription"/>
    <property type="evidence" value="ECO:0007669"/>
    <property type="project" value="UniProtKB-UniRule"/>
</dbReference>
<dbReference type="CDD" id="cd06928">
    <property type="entry name" value="RNAP_alpha_NTD"/>
    <property type="match status" value="1"/>
</dbReference>
<dbReference type="FunFam" id="1.10.150.20:FF:000001">
    <property type="entry name" value="DNA-directed RNA polymerase subunit alpha"/>
    <property type="match status" value="1"/>
</dbReference>
<dbReference type="FunFam" id="2.170.120.12:FF:000001">
    <property type="entry name" value="DNA-directed RNA polymerase subunit alpha"/>
    <property type="match status" value="1"/>
</dbReference>
<dbReference type="Gene3D" id="1.10.150.20">
    <property type="entry name" value="5' to 3' exonuclease, C-terminal subdomain"/>
    <property type="match status" value="1"/>
</dbReference>
<dbReference type="Gene3D" id="2.170.120.12">
    <property type="entry name" value="DNA-directed RNA polymerase, insert domain"/>
    <property type="match status" value="1"/>
</dbReference>
<dbReference type="Gene3D" id="3.30.1360.10">
    <property type="entry name" value="RNA polymerase, RBP11-like subunit"/>
    <property type="match status" value="1"/>
</dbReference>
<dbReference type="HAMAP" id="MF_00059">
    <property type="entry name" value="RNApol_bact_RpoA"/>
    <property type="match status" value="1"/>
</dbReference>
<dbReference type="InterPro" id="IPR011262">
    <property type="entry name" value="DNA-dir_RNA_pol_insert"/>
</dbReference>
<dbReference type="InterPro" id="IPR011263">
    <property type="entry name" value="DNA-dir_RNA_pol_RpoA/D/Rpb3"/>
</dbReference>
<dbReference type="InterPro" id="IPR011773">
    <property type="entry name" value="DNA-dir_RpoA"/>
</dbReference>
<dbReference type="InterPro" id="IPR036603">
    <property type="entry name" value="RBP11-like"/>
</dbReference>
<dbReference type="InterPro" id="IPR011260">
    <property type="entry name" value="RNAP_asu_C"/>
</dbReference>
<dbReference type="InterPro" id="IPR036643">
    <property type="entry name" value="RNApol_insert_sf"/>
</dbReference>
<dbReference type="NCBIfam" id="NF003513">
    <property type="entry name" value="PRK05182.1-2"/>
    <property type="match status" value="1"/>
</dbReference>
<dbReference type="NCBIfam" id="NF003515">
    <property type="entry name" value="PRK05182.2-1"/>
    <property type="match status" value="1"/>
</dbReference>
<dbReference type="NCBIfam" id="NF003519">
    <property type="entry name" value="PRK05182.2-5"/>
    <property type="match status" value="1"/>
</dbReference>
<dbReference type="NCBIfam" id="TIGR02027">
    <property type="entry name" value="rpoA"/>
    <property type="match status" value="1"/>
</dbReference>
<dbReference type="Pfam" id="PF01000">
    <property type="entry name" value="RNA_pol_A_bac"/>
    <property type="match status" value="1"/>
</dbReference>
<dbReference type="Pfam" id="PF03118">
    <property type="entry name" value="RNA_pol_A_CTD"/>
    <property type="match status" value="1"/>
</dbReference>
<dbReference type="Pfam" id="PF01193">
    <property type="entry name" value="RNA_pol_L"/>
    <property type="match status" value="1"/>
</dbReference>
<dbReference type="SMART" id="SM00662">
    <property type="entry name" value="RPOLD"/>
    <property type="match status" value="1"/>
</dbReference>
<dbReference type="SUPFAM" id="SSF47789">
    <property type="entry name" value="C-terminal domain of RNA polymerase alpha subunit"/>
    <property type="match status" value="1"/>
</dbReference>
<dbReference type="SUPFAM" id="SSF56553">
    <property type="entry name" value="Insert subdomain of RNA polymerase alpha subunit"/>
    <property type="match status" value="1"/>
</dbReference>
<dbReference type="SUPFAM" id="SSF55257">
    <property type="entry name" value="RBP11-like subunits of RNA polymerase"/>
    <property type="match status" value="1"/>
</dbReference>
<gene>
    <name evidence="1" type="primary">rpoA</name>
    <name type="ordered locus">lmo2606</name>
</gene>
<reference key="1">
    <citation type="journal article" date="2001" name="Science">
        <title>Comparative genomics of Listeria species.</title>
        <authorList>
            <person name="Glaser P."/>
            <person name="Frangeul L."/>
            <person name="Buchrieser C."/>
            <person name="Rusniok C."/>
            <person name="Amend A."/>
            <person name="Baquero F."/>
            <person name="Berche P."/>
            <person name="Bloecker H."/>
            <person name="Brandt P."/>
            <person name="Chakraborty T."/>
            <person name="Charbit A."/>
            <person name="Chetouani F."/>
            <person name="Couve E."/>
            <person name="de Daruvar A."/>
            <person name="Dehoux P."/>
            <person name="Domann E."/>
            <person name="Dominguez-Bernal G."/>
            <person name="Duchaud E."/>
            <person name="Durant L."/>
            <person name="Dussurget O."/>
            <person name="Entian K.-D."/>
            <person name="Fsihi H."/>
            <person name="Garcia-del Portillo F."/>
            <person name="Garrido P."/>
            <person name="Gautier L."/>
            <person name="Goebel W."/>
            <person name="Gomez-Lopez N."/>
            <person name="Hain T."/>
            <person name="Hauf J."/>
            <person name="Jackson D."/>
            <person name="Jones L.-M."/>
            <person name="Kaerst U."/>
            <person name="Kreft J."/>
            <person name="Kuhn M."/>
            <person name="Kunst F."/>
            <person name="Kurapkat G."/>
            <person name="Madueno E."/>
            <person name="Maitournam A."/>
            <person name="Mata Vicente J."/>
            <person name="Ng E."/>
            <person name="Nedjari H."/>
            <person name="Nordsiek G."/>
            <person name="Novella S."/>
            <person name="de Pablos B."/>
            <person name="Perez-Diaz J.-C."/>
            <person name="Purcell R."/>
            <person name="Remmel B."/>
            <person name="Rose M."/>
            <person name="Schlueter T."/>
            <person name="Simoes N."/>
            <person name="Tierrez A."/>
            <person name="Vazquez-Boland J.-A."/>
            <person name="Voss H."/>
            <person name="Wehland J."/>
            <person name="Cossart P."/>
        </authorList>
    </citation>
    <scope>NUCLEOTIDE SEQUENCE [LARGE SCALE GENOMIC DNA]</scope>
    <source>
        <strain>ATCC BAA-679 / EGD-e</strain>
    </source>
</reference>
<evidence type="ECO:0000255" key="1">
    <source>
        <dbReference type="HAMAP-Rule" id="MF_00059"/>
    </source>
</evidence>